<sequence>MTIEKKFVADGVRKVRVEQYLNKELKRAGYGGMDIVRTPVGTQVTIFAEKPGIVIGKGGKLVRQLTTDLSTVYGIESPQVEVQQVANPNLNAQIMAERLANALERGWYFRKAGTSVIRRVMDSGALGCEVIIAGKLTGARARVQKFVEGYIKHSGEPSESIVEKGYATAIKKLGIIGVQVKIVPPGAKLPDQFEIRADAAPAPARVVETDIFEEFDAELAAEPEPEFVEEV</sequence>
<protein>
    <recommendedName>
        <fullName evidence="1">Small ribosomal subunit protein uS3</fullName>
    </recommendedName>
    <alternativeName>
        <fullName evidence="2">30S ribosomal protein S3</fullName>
    </alternativeName>
</protein>
<reference key="1">
    <citation type="journal article" date="2009" name="Stand. Genomic Sci.">
        <title>Complete genome sequence of Methanocorpusculum labreanum type strain Z.</title>
        <authorList>
            <person name="Anderson I.J."/>
            <person name="Sieprawska-Lupa M."/>
            <person name="Goltsman E."/>
            <person name="Lapidus A."/>
            <person name="Copeland A."/>
            <person name="Glavina Del Rio T."/>
            <person name="Tice H."/>
            <person name="Dalin E."/>
            <person name="Barry K."/>
            <person name="Pitluck S."/>
            <person name="Hauser L."/>
            <person name="Land M."/>
            <person name="Lucas S."/>
            <person name="Richardson P."/>
            <person name="Whitman W.B."/>
            <person name="Kyrpides N.C."/>
        </authorList>
    </citation>
    <scope>NUCLEOTIDE SEQUENCE [LARGE SCALE GENOMIC DNA]</scope>
    <source>
        <strain>ATCC 43576 / DSM 4855 / Z</strain>
    </source>
</reference>
<dbReference type="EMBL" id="CP000559">
    <property type="protein sequence ID" value="ABN06265.1"/>
    <property type="molecule type" value="Genomic_DNA"/>
</dbReference>
<dbReference type="RefSeq" id="WP_011832466.1">
    <property type="nucleotide sequence ID" value="NC_008942.1"/>
</dbReference>
<dbReference type="SMR" id="A2SPK9"/>
<dbReference type="STRING" id="410358.Mlab_0087"/>
<dbReference type="GeneID" id="4794983"/>
<dbReference type="KEGG" id="mla:Mlab_0087"/>
<dbReference type="eggNOG" id="arCOG04097">
    <property type="taxonomic scope" value="Archaea"/>
</dbReference>
<dbReference type="HOGENOM" id="CLU_058591_1_1_2"/>
<dbReference type="OrthoDB" id="9126at2157"/>
<dbReference type="Proteomes" id="UP000000365">
    <property type="component" value="Chromosome"/>
</dbReference>
<dbReference type="GO" id="GO:0022627">
    <property type="term" value="C:cytosolic small ribosomal subunit"/>
    <property type="evidence" value="ECO:0007669"/>
    <property type="project" value="TreeGrafter"/>
</dbReference>
<dbReference type="GO" id="GO:0019843">
    <property type="term" value="F:rRNA binding"/>
    <property type="evidence" value="ECO:0007669"/>
    <property type="project" value="UniProtKB-UniRule"/>
</dbReference>
<dbReference type="GO" id="GO:0003735">
    <property type="term" value="F:structural constituent of ribosome"/>
    <property type="evidence" value="ECO:0007669"/>
    <property type="project" value="InterPro"/>
</dbReference>
<dbReference type="GO" id="GO:0006412">
    <property type="term" value="P:translation"/>
    <property type="evidence" value="ECO:0007669"/>
    <property type="project" value="UniProtKB-UniRule"/>
</dbReference>
<dbReference type="CDD" id="cd02411">
    <property type="entry name" value="KH-II_30S_S3_arch"/>
    <property type="match status" value="1"/>
</dbReference>
<dbReference type="FunFam" id="3.30.300.20:FF:000001">
    <property type="entry name" value="30S ribosomal protein S3"/>
    <property type="match status" value="1"/>
</dbReference>
<dbReference type="Gene3D" id="3.30.300.20">
    <property type="match status" value="1"/>
</dbReference>
<dbReference type="Gene3D" id="3.30.1140.32">
    <property type="entry name" value="Ribosomal protein S3, C-terminal domain"/>
    <property type="match status" value="1"/>
</dbReference>
<dbReference type="HAMAP" id="MF_01309_A">
    <property type="entry name" value="Ribosomal_uS3_A"/>
    <property type="match status" value="1"/>
</dbReference>
<dbReference type="InterPro" id="IPR004087">
    <property type="entry name" value="KH_dom"/>
</dbReference>
<dbReference type="InterPro" id="IPR015946">
    <property type="entry name" value="KH_dom-like_a/b"/>
</dbReference>
<dbReference type="InterPro" id="IPR004044">
    <property type="entry name" value="KH_dom_type_2"/>
</dbReference>
<dbReference type="InterPro" id="IPR009019">
    <property type="entry name" value="KH_sf_prok-type"/>
</dbReference>
<dbReference type="InterPro" id="IPR036419">
    <property type="entry name" value="Ribosomal_S3_C_sf"/>
</dbReference>
<dbReference type="InterPro" id="IPR027488">
    <property type="entry name" value="Ribosomal_uS3_arc"/>
</dbReference>
<dbReference type="InterPro" id="IPR001351">
    <property type="entry name" value="Ribosomal_uS3_C"/>
</dbReference>
<dbReference type="InterPro" id="IPR005703">
    <property type="entry name" value="Ribosomal_uS3_euk/arc"/>
</dbReference>
<dbReference type="NCBIfam" id="NF003219">
    <property type="entry name" value="PRK04191.1"/>
    <property type="match status" value="1"/>
</dbReference>
<dbReference type="NCBIfam" id="TIGR01008">
    <property type="entry name" value="uS3_euk_arch"/>
    <property type="match status" value="1"/>
</dbReference>
<dbReference type="PANTHER" id="PTHR11760">
    <property type="entry name" value="30S/40S RIBOSOMAL PROTEIN S3"/>
    <property type="match status" value="1"/>
</dbReference>
<dbReference type="PANTHER" id="PTHR11760:SF32">
    <property type="entry name" value="SMALL RIBOSOMAL SUBUNIT PROTEIN US3"/>
    <property type="match status" value="1"/>
</dbReference>
<dbReference type="Pfam" id="PF07650">
    <property type="entry name" value="KH_2"/>
    <property type="match status" value="1"/>
</dbReference>
<dbReference type="Pfam" id="PF00189">
    <property type="entry name" value="Ribosomal_S3_C"/>
    <property type="match status" value="1"/>
</dbReference>
<dbReference type="SMART" id="SM00322">
    <property type="entry name" value="KH"/>
    <property type="match status" value="1"/>
</dbReference>
<dbReference type="SUPFAM" id="SSF54814">
    <property type="entry name" value="Prokaryotic type KH domain (KH-domain type II)"/>
    <property type="match status" value="1"/>
</dbReference>
<dbReference type="SUPFAM" id="SSF54821">
    <property type="entry name" value="Ribosomal protein S3 C-terminal domain"/>
    <property type="match status" value="1"/>
</dbReference>
<dbReference type="PROSITE" id="PS50823">
    <property type="entry name" value="KH_TYPE_2"/>
    <property type="match status" value="1"/>
</dbReference>
<keyword id="KW-1185">Reference proteome</keyword>
<keyword id="KW-0687">Ribonucleoprotein</keyword>
<keyword id="KW-0689">Ribosomal protein</keyword>
<keyword id="KW-0694">RNA-binding</keyword>
<keyword id="KW-0699">rRNA-binding</keyword>
<feature type="chain" id="PRO_0000293923" description="Small ribosomal subunit protein uS3">
    <location>
        <begin position="1"/>
        <end position="231"/>
    </location>
</feature>
<feature type="domain" description="KH type-2" evidence="1">
    <location>
        <begin position="17"/>
        <end position="86"/>
    </location>
</feature>
<gene>
    <name evidence="1" type="primary">rps3</name>
    <name type="ordered locus">Mlab_0087</name>
</gene>
<organism>
    <name type="scientific">Methanocorpusculum labreanum (strain ATCC 43576 / DSM 4855 / Z)</name>
    <dbReference type="NCBI Taxonomy" id="410358"/>
    <lineage>
        <taxon>Archaea</taxon>
        <taxon>Methanobacteriati</taxon>
        <taxon>Methanobacteriota</taxon>
        <taxon>Stenosarchaea group</taxon>
        <taxon>Methanomicrobia</taxon>
        <taxon>Methanomicrobiales</taxon>
        <taxon>Methanocorpusculaceae</taxon>
        <taxon>Methanocorpusculum</taxon>
    </lineage>
</organism>
<accession>A2SPK9</accession>
<name>RS3_METLZ</name>
<proteinExistence type="inferred from homology"/>
<evidence type="ECO:0000255" key="1">
    <source>
        <dbReference type="HAMAP-Rule" id="MF_01309"/>
    </source>
</evidence>
<evidence type="ECO:0000305" key="2"/>
<comment type="function">
    <text evidence="1">Binds the lower part of the 30S subunit head.</text>
</comment>
<comment type="subunit">
    <text evidence="1">Part of the 30S ribosomal subunit.</text>
</comment>
<comment type="similarity">
    <text evidence="1">Belongs to the universal ribosomal protein uS3 family.</text>
</comment>